<dbReference type="EMBL" id="AC006954">
    <property type="protein sequence ID" value="AAM15334.1"/>
    <property type="status" value="ALT_SEQ"/>
    <property type="molecule type" value="Genomic_DNA"/>
</dbReference>
<dbReference type="EMBL" id="CP002685">
    <property type="protein sequence ID" value="AEC07616.1"/>
    <property type="molecule type" value="Genomic_DNA"/>
</dbReference>
<dbReference type="PIR" id="G84639">
    <property type="entry name" value="G84639"/>
</dbReference>
<dbReference type="RefSeq" id="NP_180045.5">
    <property type="nucleotide sequence ID" value="NM_128030.5"/>
</dbReference>
<dbReference type="SMR" id="Q8S8E8"/>
<dbReference type="FunCoup" id="Q8S8E8">
    <property type="interactions" value="71"/>
</dbReference>
<dbReference type="STRING" id="3702.Q8S8E8"/>
<dbReference type="PaxDb" id="3702-AT2G24690.1"/>
<dbReference type="EnsemblPlants" id="AT2G24690.1">
    <property type="protein sequence ID" value="AT2G24690.1"/>
    <property type="gene ID" value="AT2G24690"/>
</dbReference>
<dbReference type="GeneID" id="817005"/>
<dbReference type="Gramene" id="AT2G24690.1">
    <property type="protein sequence ID" value="AT2G24690.1"/>
    <property type="gene ID" value="AT2G24690"/>
</dbReference>
<dbReference type="KEGG" id="ath:AT2G24690"/>
<dbReference type="Araport" id="AT2G24690"/>
<dbReference type="TAIR" id="AT2G24690"/>
<dbReference type="HOGENOM" id="CLU_307843_0_0_1"/>
<dbReference type="InParanoid" id="Q8S8E8"/>
<dbReference type="PRO" id="PR:Q8S8E8"/>
<dbReference type="Proteomes" id="UP000006548">
    <property type="component" value="Chromosome 2"/>
</dbReference>
<dbReference type="ExpressionAtlas" id="Q8S8E8">
    <property type="expression patterns" value="baseline and differential"/>
</dbReference>
<dbReference type="GO" id="GO:0005634">
    <property type="term" value="C:nucleus"/>
    <property type="evidence" value="ECO:0007669"/>
    <property type="project" value="UniProtKB-SubCell"/>
</dbReference>
<dbReference type="GO" id="GO:0003677">
    <property type="term" value="F:DNA binding"/>
    <property type="evidence" value="ECO:0007669"/>
    <property type="project" value="UniProtKB-KW"/>
</dbReference>
<dbReference type="CDD" id="cd10017">
    <property type="entry name" value="B3_DNA"/>
    <property type="match status" value="3"/>
</dbReference>
<dbReference type="Gene3D" id="2.40.330.10">
    <property type="entry name" value="DNA-binding pseudobarrel domain"/>
    <property type="match status" value="3"/>
</dbReference>
<dbReference type="InterPro" id="IPR003340">
    <property type="entry name" value="B3_DNA-bd"/>
</dbReference>
<dbReference type="InterPro" id="IPR015300">
    <property type="entry name" value="DNA-bd_pseudobarrel_sf"/>
</dbReference>
<dbReference type="InterPro" id="IPR039218">
    <property type="entry name" value="REM_fam"/>
</dbReference>
<dbReference type="PANTHER" id="PTHR31674">
    <property type="entry name" value="B3 DOMAIN-CONTAINING PROTEIN REM-LIKE 3-RELATED"/>
    <property type="match status" value="1"/>
</dbReference>
<dbReference type="PANTHER" id="PTHR31674:SF25">
    <property type="entry name" value="B3 DOMAIN-CONTAINING TRANSCRIPTION FACTOR VRN1-LIKE"/>
    <property type="match status" value="1"/>
</dbReference>
<dbReference type="Pfam" id="PF02362">
    <property type="entry name" value="B3"/>
    <property type="match status" value="4"/>
</dbReference>
<dbReference type="SMART" id="SM01019">
    <property type="entry name" value="B3"/>
    <property type="match status" value="4"/>
</dbReference>
<dbReference type="SUPFAM" id="SSF101936">
    <property type="entry name" value="DNA-binding pseudobarrel domain"/>
    <property type="match status" value="4"/>
</dbReference>
<dbReference type="PROSITE" id="PS50863">
    <property type="entry name" value="B3"/>
    <property type="match status" value="4"/>
</dbReference>
<sequence length="777" mass="87156">MANSLILGSPINPEGEMMIQFSNNHDNNIEFQRRKKMKKNNPETETDSSSDLSCFVAQTGALLHLPQGFTSSNGSNRECRKSPRPIISSYSSSEKQFVTFTLAPVDGRHCRLRLPMQFTRENGINKPGKIYLVGKDGSKWLANLLLENNRGRMTLGDGWKSFVKANGLKTGDTYTFKLLWEDTTPVLSLCFEEYNTDTRVGEESSKESLPAEPSSQEKIVKDDNNKDESSTWKREGNHLRCKDSTSPSQNCTLTVTITPDSLEHGRLRLPLQFMTENSMNKPGEITLLGTDGAKWMASLLLEKKGRMSLGKGWKDFAKANGLKTGDSITLEPIWEDRTPVLSIKSSSGKGQSEFSKESLSIKPSSGNMTKKVENNREASRKYPPRSRESSSAIQNQFMALTPLRDIVSQVAHDLSIGEVINFRHKGDNMLRVSDLGSNCCGVQDLLAPSSNYDHDNISNISMKINPHIRKEAVTFSSYDGYAHDNFEPPSKKKVKKNNPEMEADYLSDHSCFVSHVTTSSLHTNALSLEVKESLPIEPSIKPNISEDDNNKEEDIIEENSSFEREKNHWICIDSISSSQNRFLTLTITPDSLKHGRLRLPLQFMIENSMNKPGEITVLGKDGAKWLVSLLLERRGRMSLDASSGQETREAEKNREESSSLWELEKRTYCPRKRDSSSDVKNRFLTLTLAPEDVKDGNLHLPCQFMRINGINKPGQITLLGRGGMKWFAYLLSGDGTVVVGNGWKGFCEANGVMLGETFVLEFIPKDDTNHVFKFYTK</sequence>
<protein>
    <recommendedName>
        <fullName>B3 domain-containing protein REM-like 1</fullName>
    </recommendedName>
    <alternativeName>
        <fullName>Protein REPRODUCTIVE MERISTEM-like 1</fullName>
    </alternativeName>
</protein>
<organism>
    <name type="scientific">Arabidopsis thaliana</name>
    <name type="common">Mouse-ear cress</name>
    <dbReference type="NCBI Taxonomy" id="3702"/>
    <lineage>
        <taxon>Eukaryota</taxon>
        <taxon>Viridiplantae</taxon>
        <taxon>Streptophyta</taxon>
        <taxon>Embryophyta</taxon>
        <taxon>Tracheophyta</taxon>
        <taxon>Spermatophyta</taxon>
        <taxon>Magnoliopsida</taxon>
        <taxon>eudicotyledons</taxon>
        <taxon>Gunneridae</taxon>
        <taxon>Pentapetalae</taxon>
        <taxon>rosids</taxon>
        <taxon>malvids</taxon>
        <taxon>Brassicales</taxon>
        <taxon>Brassicaceae</taxon>
        <taxon>Camelineae</taxon>
        <taxon>Arabidopsis</taxon>
    </lineage>
</organism>
<proteinExistence type="inferred from homology"/>
<name>REML1_ARATH</name>
<accession>Q8S8E8</accession>
<accession>F4IQL4</accession>
<feature type="chain" id="PRO_0000412838" description="B3 domain-containing protein REM-like 1">
    <location>
        <begin position="1"/>
        <end position="777"/>
    </location>
</feature>
<feature type="DNA-binding region" description="TF-B3 1" evidence="1">
    <location>
        <begin position="97"/>
        <end position="193"/>
    </location>
</feature>
<feature type="DNA-binding region" description="TF-B3 2" evidence="1">
    <location>
        <begin position="252"/>
        <end position="347"/>
    </location>
</feature>
<feature type="DNA-binding region" description="TF-B3 3" evidence="1">
    <location>
        <begin position="582"/>
        <end position="676"/>
    </location>
</feature>
<feature type="DNA-binding region" description="TF-B3 4" evidence="1">
    <location>
        <begin position="683"/>
        <end position="777"/>
    </location>
</feature>
<feature type="region of interest" description="Disordered" evidence="2">
    <location>
        <begin position="200"/>
        <end position="248"/>
    </location>
</feature>
<feature type="region of interest" description="Disordered" evidence="2">
    <location>
        <begin position="344"/>
        <end position="391"/>
    </location>
</feature>
<feature type="compositionally biased region" description="Basic and acidic residues" evidence="2">
    <location>
        <begin position="218"/>
        <end position="243"/>
    </location>
</feature>
<feature type="compositionally biased region" description="Polar residues" evidence="2">
    <location>
        <begin position="344"/>
        <end position="368"/>
    </location>
</feature>
<feature type="compositionally biased region" description="Basic and acidic residues" evidence="2">
    <location>
        <begin position="370"/>
        <end position="388"/>
    </location>
</feature>
<comment type="subcellular location">
    <subcellularLocation>
        <location evidence="1">Nucleus</location>
    </subcellularLocation>
</comment>
<comment type="sequence caution" evidence="3">
    <conflict type="erroneous gene model prediction">
        <sequence resource="EMBL-CDS" id="AAM15334"/>
    </conflict>
</comment>
<gene>
    <name type="ordered locus">At2g24690</name>
    <name type="ORF">F25P17.1</name>
</gene>
<evidence type="ECO:0000255" key="1">
    <source>
        <dbReference type="PROSITE-ProRule" id="PRU00326"/>
    </source>
</evidence>
<evidence type="ECO:0000256" key="2">
    <source>
        <dbReference type="SAM" id="MobiDB-lite"/>
    </source>
</evidence>
<evidence type="ECO:0000305" key="3"/>
<keyword id="KW-0238">DNA-binding</keyword>
<keyword id="KW-0539">Nucleus</keyword>
<keyword id="KW-1185">Reference proteome</keyword>
<keyword id="KW-0677">Repeat</keyword>
<keyword id="KW-0804">Transcription</keyword>
<keyword id="KW-0805">Transcription regulation</keyword>
<reference key="1">
    <citation type="journal article" date="1999" name="Nature">
        <title>Sequence and analysis of chromosome 2 of the plant Arabidopsis thaliana.</title>
        <authorList>
            <person name="Lin X."/>
            <person name="Kaul S."/>
            <person name="Rounsley S.D."/>
            <person name="Shea T.P."/>
            <person name="Benito M.-I."/>
            <person name="Town C.D."/>
            <person name="Fujii C.Y."/>
            <person name="Mason T.M."/>
            <person name="Bowman C.L."/>
            <person name="Barnstead M.E."/>
            <person name="Feldblyum T.V."/>
            <person name="Buell C.R."/>
            <person name="Ketchum K.A."/>
            <person name="Lee J.J."/>
            <person name="Ronning C.M."/>
            <person name="Koo H.L."/>
            <person name="Moffat K.S."/>
            <person name="Cronin L.A."/>
            <person name="Shen M."/>
            <person name="Pai G."/>
            <person name="Van Aken S."/>
            <person name="Umayam L."/>
            <person name="Tallon L.J."/>
            <person name="Gill J.E."/>
            <person name="Adams M.D."/>
            <person name="Carrera A.J."/>
            <person name="Creasy T.H."/>
            <person name="Goodman H.M."/>
            <person name="Somerville C.R."/>
            <person name="Copenhaver G.P."/>
            <person name="Preuss D."/>
            <person name="Nierman W.C."/>
            <person name="White O."/>
            <person name="Eisen J.A."/>
            <person name="Salzberg S.L."/>
            <person name="Fraser C.M."/>
            <person name="Venter J.C."/>
        </authorList>
    </citation>
    <scope>NUCLEOTIDE SEQUENCE [LARGE SCALE GENOMIC DNA]</scope>
    <source>
        <strain>cv. Columbia</strain>
    </source>
</reference>
<reference key="2">
    <citation type="journal article" date="2017" name="Plant J.">
        <title>Araport11: a complete reannotation of the Arabidopsis thaliana reference genome.</title>
        <authorList>
            <person name="Cheng C.Y."/>
            <person name="Krishnakumar V."/>
            <person name="Chan A.P."/>
            <person name="Thibaud-Nissen F."/>
            <person name="Schobel S."/>
            <person name="Town C.D."/>
        </authorList>
    </citation>
    <scope>GENOME REANNOTATION</scope>
    <source>
        <strain>cv. Columbia</strain>
    </source>
</reference>
<reference key="3">
    <citation type="journal article" date="2008" name="Trends Plant Sci.">
        <title>The plant B3 superfamily.</title>
        <authorList>
            <person name="Swaminathan K."/>
            <person name="Peterson K."/>
            <person name="Jack T."/>
        </authorList>
    </citation>
    <scope>GENE FAMILY</scope>
</reference>